<organism>
    <name type="scientific">Schizosaccharomyces pombe (strain 972 / ATCC 24843)</name>
    <name type="common">Fission yeast</name>
    <dbReference type="NCBI Taxonomy" id="284812"/>
    <lineage>
        <taxon>Eukaryota</taxon>
        <taxon>Fungi</taxon>
        <taxon>Dikarya</taxon>
        <taxon>Ascomycota</taxon>
        <taxon>Taphrinomycotina</taxon>
        <taxon>Schizosaccharomycetes</taxon>
        <taxon>Schizosaccharomycetales</taxon>
        <taxon>Schizosaccharomycetaceae</taxon>
        <taxon>Schizosaccharomyces</taxon>
    </lineage>
</organism>
<keyword id="KW-0156">Chromatin regulator</keyword>
<keyword id="KW-0539">Nucleus</keyword>
<keyword id="KW-1185">Reference proteome</keyword>
<keyword id="KW-0678">Repressor</keyword>
<keyword id="KW-0804">Transcription</keyword>
<keyword id="KW-0805">Transcription regulation</keyword>
<evidence type="ECO:0000255" key="1">
    <source>
        <dbReference type="PROSITE-ProRule" id="PRU00247"/>
    </source>
</evidence>
<evidence type="ECO:0000256" key="2">
    <source>
        <dbReference type="SAM" id="MobiDB-lite"/>
    </source>
</evidence>
<evidence type="ECO:0000269" key="3">
    <source>
    </source>
</evidence>
<evidence type="ECO:0000305" key="4"/>
<sequence length="297" mass="33903">MKSSQTLVYSIPRNVEKDTCAAAIKAYQYLISPPPSPIPNDKVASTVDVPKCSTIPESPKDSIVEPKPTATPVAQLHSKVYDLYRDSPKIWLRRERQWLQRHSPAYRFSTPAAKRPRRQPSSFLDVHASNTRKRGSPDTPDSGHSTPHSKGDVHPGMPQHNTRFKQSSREFSSNTQAIDVANTPYELLPDYSPDMSVLDKRSHPRPLRSEWKGPPLDLSNDENRHLLHPAELQLAATLRLPCLVYLDNKRRIFAEWHNRRTQGLSFRKTDAQRASRVDVNKASRLWKAFHDEGFFDD</sequence>
<feature type="chain" id="PRO_0000116687" description="SWIRM domain-containing protein laf1">
    <location>
        <begin position="1"/>
        <end position="297"/>
    </location>
</feature>
<feature type="domain" description="SWIRM" evidence="1">
    <location>
        <begin position="207"/>
        <end position="297"/>
    </location>
</feature>
<feature type="region of interest" description="Disordered" evidence="2">
    <location>
        <begin position="50"/>
        <end position="70"/>
    </location>
</feature>
<feature type="region of interest" description="Disordered" evidence="2">
    <location>
        <begin position="109"/>
        <end position="173"/>
    </location>
</feature>
<feature type="compositionally biased region" description="Polar residues" evidence="2">
    <location>
        <begin position="159"/>
        <end position="173"/>
    </location>
</feature>
<gene>
    <name type="primary">laf1</name>
    <name type="ORF">SPAC14C4.12c</name>
</gene>
<name>LAF1_SCHPO</name>
<accession>O13719</accession>
<comment type="function">
    <text>Component of the RPD3C(L) histone deacetylase complex (HDAC) responsible for the deacetylation of lysine residues on the N-terminal part of the core histones (H2A, H2B, H3 and H4). Histone deacetylation gives a tag for epigenetic repression and plays an important role in transcriptional regulation, cell cycle progression and developmental events.</text>
</comment>
<comment type="subunit">
    <text evidence="3">Component of the RPD3C(L) complex.</text>
</comment>
<comment type="subcellular location">
    <subcellularLocation>
        <location evidence="4">Nucleus</location>
    </subcellularLocation>
</comment>
<dbReference type="EMBL" id="CU329670">
    <property type="protein sequence ID" value="CAB11205.1"/>
    <property type="molecule type" value="Genomic_DNA"/>
</dbReference>
<dbReference type="PIR" id="T37697">
    <property type="entry name" value="T37697"/>
</dbReference>
<dbReference type="RefSeq" id="NP_594917.1">
    <property type="nucleotide sequence ID" value="NM_001020349.2"/>
</dbReference>
<dbReference type="SMR" id="O13719"/>
<dbReference type="BioGRID" id="278146">
    <property type="interactions" value="48"/>
</dbReference>
<dbReference type="FunCoup" id="O13719">
    <property type="interactions" value="33"/>
</dbReference>
<dbReference type="STRING" id="284812.O13719"/>
<dbReference type="iPTMnet" id="O13719"/>
<dbReference type="PaxDb" id="4896-SPAC14C4.12c.1"/>
<dbReference type="EnsemblFungi" id="SPAC14C4.12c.1">
    <property type="protein sequence ID" value="SPAC14C4.12c.1:pep"/>
    <property type="gene ID" value="SPAC14C4.12c"/>
</dbReference>
<dbReference type="GeneID" id="2541650"/>
<dbReference type="KEGG" id="spo:2541650"/>
<dbReference type="PomBase" id="SPAC14C4.12c">
    <property type="gene designation" value="laf1"/>
</dbReference>
<dbReference type="VEuPathDB" id="FungiDB:SPAC14C4.12c"/>
<dbReference type="eggNOG" id="ENOG502R6VN">
    <property type="taxonomic scope" value="Eukaryota"/>
</dbReference>
<dbReference type="HOGENOM" id="CLU_900649_0_0_1"/>
<dbReference type="InParanoid" id="O13719"/>
<dbReference type="OMA" id="IFAEWHN"/>
<dbReference type="PhylomeDB" id="O13719"/>
<dbReference type="Reactome" id="R-SPO-5689880">
    <property type="pathway name" value="Ub-specific processing proteases"/>
</dbReference>
<dbReference type="PRO" id="PR:O13719"/>
<dbReference type="Proteomes" id="UP000002485">
    <property type="component" value="Chromosome I"/>
</dbReference>
<dbReference type="GO" id="GO:0005634">
    <property type="term" value="C:nucleus"/>
    <property type="evidence" value="ECO:0000318"/>
    <property type="project" value="GO_Central"/>
</dbReference>
<dbReference type="GO" id="GO:0033698">
    <property type="term" value="C:Rpd3L complex"/>
    <property type="evidence" value="ECO:0000314"/>
    <property type="project" value="PomBase"/>
</dbReference>
<dbReference type="GO" id="GO:0070210">
    <property type="term" value="C:Rpd3L-Expanded complex"/>
    <property type="evidence" value="ECO:0000314"/>
    <property type="project" value="PomBase"/>
</dbReference>
<dbReference type="GO" id="GO:0003682">
    <property type="term" value="F:chromatin binding"/>
    <property type="evidence" value="ECO:0000318"/>
    <property type="project" value="GO_Central"/>
</dbReference>
<dbReference type="GO" id="GO:0003677">
    <property type="term" value="F:DNA binding"/>
    <property type="evidence" value="ECO:0000255"/>
    <property type="project" value="PomBase"/>
</dbReference>
<dbReference type="GO" id="GO:0003713">
    <property type="term" value="F:transcription coactivator activity"/>
    <property type="evidence" value="ECO:0000318"/>
    <property type="project" value="GO_Central"/>
</dbReference>
<dbReference type="GO" id="GO:0006338">
    <property type="term" value="P:chromatin remodeling"/>
    <property type="evidence" value="ECO:0000353"/>
    <property type="project" value="PomBase"/>
</dbReference>
<dbReference type="GO" id="GO:0006357">
    <property type="term" value="P:regulation of transcription by RNA polymerase II"/>
    <property type="evidence" value="ECO:0000318"/>
    <property type="project" value="GO_Central"/>
</dbReference>
<dbReference type="GO" id="GO:0045815">
    <property type="term" value="P:transcription initiation-coupled chromatin remodeling"/>
    <property type="evidence" value="ECO:0000305"/>
    <property type="project" value="PomBase"/>
</dbReference>
<dbReference type="FunFam" id="1.10.10.10:FF:000087">
    <property type="entry name" value="Transcriptional adapter 2"/>
    <property type="match status" value="1"/>
</dbReference>
<dbReference type="Gene3D" id="1.10.10.10">
    <property type="entry name" value="Winged helix-like DNA-binding domain superfamily/Winged helix DNA-binding domain"/>
    <property type="match status" value="1"/>
</dbReference>
<dbReference type="InterPro" id="IPR009057">
    <property type="entry name" value="Homeodomain-like_sf"/>
</dbReference>
<dbReference type="InterPro" id="IPR007526">
    <property type="entry name" value="SWIRM"/>
</dbReference>
<dbReference type="InterPro" id="IPR036388">
    <property type="entry name" value="WH-like_DNA-bd_sf"/>
</dbReference>
<dbReference type="PANTHER" id="PTHR12374:SF21">
    <property type="entry name" value="SWIRM DOMAIN-CONTAINING PROTEIN FUN19-RELATED"/>
    <property type="match status" value="1"/>
</dbReference>
<dbReference type="PANTHER" id="PTHR12374">
    <property type="entry name" value="TRANSCRIPTIONAL ADAPTOR 2 ADA2 -RELATED"/>
    <property type="match status" value="1"/>
</dbReference>
<dbReference type="Pfam" id="PF04433">
    <property type="entry name" value="SWIRM"/>
    <property type="match status" value="1"/>
</dbReference>
<dbReference type="SUPFAM" id="SSF46689">
    <property type="entry name" value="Homeodomain-like"/>
    <property type="match status" value="1"/>
</dbReference>
<dbReference type="PROSITE" id="PS50934">
    <property type="entry name" value="SWIRM"/>
    <property type="match status" value="1"/>
</dbReference>
<protein>
    <recommendedName>
        <fullName>SWIRM domain-containing protein laf1</fullName>
    </recommendedName>
    <alternativeName>
        <fullName>Clr6 L-associated factor 1</fullName>
    </alternativeName>
</protein>
<proteinExistence type="evidence at protein level"/>
<reference key="1">
    <citation type="journal article" date="2002" name="Nature">
        <title>The genome sequence of Schizosaccharomyces pombe.</title>
        <authorList>
            <person name="Wood V."/>
            <person name="Gwilliam R."/>
            <person name="Rajandream M.A."/>
            <person name="Lyne M.H."/>
            <person name="Lyne R."/>
            <person name="Stewart A."/>
            <person name="Sgouros J.G."/>
            <person name="Peat N."/>
            <person name="Hayles J."/>
            <person name="Baker S.G."/>
            <person name="Basham D."/>
            <person name="Bowman S."/>
            <person name="Brooks K."/>
            <person name="Brown D."/>
            <person name="Brown S."/>
            <person name="Chillingworth T."/>
            <person name="Churcher C.M."/>
            <person name="Collins M."/>
            <person name="Connor R."/>
            <person name="Cronin A."/>
            <person name="Davis P."/>
            <person name="Feltwell T."/>
            <person name="Fraser A."/>
            <person name="Gentles S."/>
            <person name="Goble A."/>
            <person name="Hamlin N."/>
            <person name="Harris D.E."/>
            <person name="Hidalgo J."/>
            <person name="Hodgson G."/>
            <person name="Holroyd S."/>
            <person name="Hornsby T."/>
            <person name="Howarth S."/>
            <person name="Huckle E.J."/>
            <person name="Hunt S."/>
            <person name="Jagels K."/>
            <person name="James K.D."/>
            <person name="Jones L."/>
            <person name="Jones M."/>
            <person name="Leather S."/>
            <person name="McDonald S."/>
            <person name="McLean J."/>
            <person name="Mooney P."/>
            <person name="Moule S."/>
            <person name="Mungall K.L."/>
            <person name="Murphy L.D."/>
            <person name="Niblett D."/>
            <person name="Odell C."/>
            <person name="Oliver K."/>
            <person name="O'Neil S."/>
            <person name="Pearson D."/>
            <person name="Quail M.A."/>
            <person name="Rabbinowitsch E."/>
            <person name="Rutherford K.M."/>
            <person name="Rutter S."/>
            <person name="Saunders D."/>
            <person name="Seeger K."/>
            <person name="Sharp S."/>
            <person name="Skelton J."/>
            <person name="Simmonds M.N."/>
            <person name="Squares R."/>
            <person name="Squares S."/>
            <person name="Stevens K."/>
            <person name="Taylor K."/>
            <person name="Taylor R.G."/>
            <person name="Tivey A."/>
            <person name="Walsh S.V."/>
            <person name="Warren T."/>
            <person name="Whitehead S."/>
            <person name="Woodward J.R."/>
            <person name="Volckaert G."/>
            <person name="Aert R."/>
            <person name="Robben J."/>
            <person name="Grymonprez B."/>
            <person name="Weltjens I."/>
            <person name="Vanstreels E."/>
            <person name="Rieger M."/>
            <person name="Schaefer M."/>
            <person name="Mueller-Auer S."/>
            <person name="Gabel C."/>
            <person name="Fuchs M."/>
            <person name="Duesterhoeft A."/>
            <person name="Fritzc C."/>
            <person name="Holzer E."/>
            <person name="Moestl D."/>
            <person name="Hilbert H."/>
            <person name="Borzym K."/>
            <person name="Langer I."/>
            <person name="Beck A."/>
            <person name="Lehrach H."/>
            <person name="Reinhardt R."/>
            <person name="Pohl T.M."/>
            <person name="Eger P."/>
            <person name="Zimmermann W."/>
            <person name="Wedler H."/>
            <person name="Wambutt R."/>
            <person name="Purnelle B."/>
            <person name="Goffeau A."/>
            <person name="Cadieu E."/>
            <person name="Dreano S."/>
            <person name="Gloux S."/>
            <person name="Lelaure V."/>
            <person name="Mottier S."/>
            <person name="Galibert F."/>
            <person name="Aves S.J."/>
            <person name="Xiang Z."/>
            <person name="Hunt C."/>
            <person name="Moore K."/>
            <person name="Hurst S.M."/>
            <person name="Lucas M."/>
            <person name="Rochet M."/>
            <person name="Gaillardin C."/>
            <person name="Tallada V.A."/>
            <person name="Garzon A."/>
            <person name="Thode G."/>
            <person name="Daga R.R."/>
            <person name="Cruzado L."/>
            <person name="Jimenez J."/>
            <person name="Sanchez M."/>
            <person name="del Rey F."/>
            <person name="Benito J."/>
            <person name="Dominguez A."/>
            <person name="Revuelta J.L."/>
            <person name="Moreno S."/>
            <person name="Armstrong J."/>
            <person name="Forsburg S.L."/>
            <person name="Cerutti L."/>
            <person name="Lowe T."/>
            <person name="McCombie W.R."/>
            <person name="Paulsen I."/>
            <person name="Potashkin J."/>
            <person name="Shpakovski G.V."/>
            <person name="Ussery D."/>
            <person name="Barrell B.G."/>
            <person name="Nurse P."/>
        </authorList>
    </citation>
    <scope>NUCLEOTIDE SEQUENCE [LARGE SCALE GENOMIC DNA]</scope>
    <source>
        <strain>972 / ATCC 24843</strain>
    </source>
</reference>
<reference key="2">
    <citation type="journal article" date="2008" name="Genome Biol.">
        <title>Chromatin Central: towards the comparative proteome by accurate mapping of the yeast proteomic environment.</title>
        <authorList>
            <person name="Shevchenko A."/>
            <person name="Roguev A."/>
            <person name="Schaft D."/>
            <person name="Buchanan L."/>
            <person name="Habermann B."/>
            <person name="Sakalar C."/>
            <person name="Thomas H."/>
            <person name="Krogan N.J."/>
            <person name="Shevchenko A."/>
            <person name="Stewart A.F."/>
        </authorList>
    </citation>
    <scope>IDENTIFICATION IN THE RPD3C(L) COMPLEX</scope>
    <scope>IDENTIFICATION BY MASS SPECTROMETRY</scope>
</reference>